<reference key="1">
    <citation type="journal article" date="2010" name="Science">
        <title>Genomic comparison of the ants Camponotus floridanus and Harpegnathos saltator.</title>
        <authorList>
            <person name="Bonasio R."/>
            <person name="Zhang G."/>
            <person name="Ye C."/>
            <person name="Mutti N.S."/>
            <person name="Fang X."/>
            <person name="Qin N."/>
            <person name="Donahue G."/>
            <person name="Yang P."/>
            <person name="Li Q."/>
            <person name="Li C."/>
            <person name="Zhang P."/>
            <person name="Huang Z."/>
            <person name="Berger S.L."/>
            <person name="Reinberg D."/>
            <person name="Wang J."/>
            <person name="Liebig J."/>
        </authorList>
    </citation>
    <scope>NUCLEOTIDE SEQUENCE [LARGE SCALE GENOMIC DNA]</scope>
</reference>
<reference evidence="5" key="2">
    <citation type="journal article" date="2015" name="J. Proteome Res.">
        <title>Neuropeptidomics of the carpenter ant Camponotus floridanus.</title>
        <authorList>
            <person name="Schmitt F."/>
            <person name="Vanselow J.T."/>
            <person name="Schlosser A."/>
            <person name="Kahnt J."/>
            <person name="Roessler W."/>
            <person name="Wegener C."/>
        </authorList>
    </citation>
    <scope>PROTEIN SEQUENCE OF 17-27</scope>
    <scope>TISSUE SPECIFICITY</scope>
    <scope>MASS SPECTROMETRY</scope>
    <scope>IDENTIFICATION BY MASS SPECTROMETRY</scope>
    <scope>AMIDATION AT ASN-27</scope>
</reference>
<proteinExistence type="evidence at protein level"/>
<gene>
    <name evidence="7" type="ORF">EAG_04993</name>
</gene>
<keyword id="KW-0027">Amidation</keyword>
<keyword id="KW-0903">Direct protein sequencing</keyword>
<keyword id="KW-0527">Neuropeptide</keyword>
<keyword id="KW-1185">Reference proteome</keyword>
<keyword id="KW-0964">Secreted</keyword>
<keyword id="KW-0732">Signal</keyword>
<protein>
    <recommendedName>
        <fullName evidence="7">Pro-corazonin</fullName>
    </recommendedName>
    <component>
        <recommendedName>
            <fullName evidence="4">Corazonin</fullName>
        </recommendedName>
    </component>
</protein>
<organism>
    <name type="scientific">Camponotus floridanus</name>
    <name type="common">Florida carpenter ant</name>
    <dbReference type="NCBI Taxonomy" id="104421"/>
    <lineage>
        <taxon>Eukaryota</taxon>
        <taxon>Metazoa</taxon>
        <taxon>Ecdysozoa</taxon>
        <taxon>Arthropoda</taxon>
        <taxon>Hexapoda</taxon>
        <taxon>Insecta</taxon>
        <taxon>Pterygota</taxon>
        <taxon>Neoptera</taxon>
        <taxon>Endopterygota</taxon>
        <taxon>Hymenoptera</taxon>
        <taxon>Apocrita</taxon>
        <taxon>Aculeata</taxon>
        <taxon>Formicoidea</taxon>
        <taxon>Formicidae</taxon>
        <taxon>Formicinae</taxon>
        <taxon>Camponotus</taxon>
    </lineage>
</organism>
<dbReference type="EMBL" id="GL442192">
    <property type="protein sequence ID" value="EFN63812.1"/>
    <property type="molecule type" value="Genomic_DNA"/>
</dbReference>
<dbReference type="EnsemblMetazoa" id="XM_011264649.2">
    <property type="protein sequence ID" value="XP_011262951.1"/>
    <property type="gene ID" value="LOC105255391"/>
</dbReference>
<dbReference type="OMA" id="LCQTFQY"/>
<dbReference type="OrthoDB" id="6436322at2759"/>
<dbReference type="Proteomes" id="UP000000311">
    <property type="component" value="Unassembled WGS sequence"/>
</dbReference>
<dbReference type="GO" id="GO:0005576">
    <property type="term" value="C:extracellular region"/>
    <property type="evidence" value="ECO:0007669"/>
    <property type="project" value="UniProtKB-SubCell"/>
</dbReference>
<dbReference type="GO" id="GO:0071858">
    <property type="term" value="F:corazonin receptor binding"/>
    <property type="evidence" value="ECO:0007669"/>
    <property type="project" value="InterPro"/>
</dbReference>
<dbReference type="GO" id="GO:0007218">
    <property type="term" value="P:neuropeptide signaling pathway"/>
    <property type="evidence" value="ECO:0007669"/>
    <property type="project" value="UniProtKB-KW"/>
</dbReference>
<dbReference type="GO" id="GO:0045823">
    <property type="term" value="P:positive regulation of heart contraction"/>
    <property type="evidence" value="ECO:0007669"/>
    <property type="project" value="InterPro"/>
</dbReference>
<dbReference type="InterPro" id="IPR020190">
    <property type="entry name" value="Procorazonin"/>
</dbReference>
<dbReference type="Pfam" id="PF17308">
    <property type="entry name" value="Corazonin"/>
    <property type="match status" value="1"/>
</dbReference>
<comment type="function">
    <text evidence="1">Cardioactive peptide. Corazonin is probably involved in the physiological regulation of the heart beat.</text>
</comment>
<comment type="subcellular location">
    <subcellularLocation>
        <location evidence="6">Secreted</location>
    </subcellularLocation>
</comment>
<comment type="tissue specificity">
    <text evidence="3">Expressed in central brain and the retrocerebral complex but not in antennal lobes, optic lobes or in gnathal, thoracic and abdominal ganglia (at protein level).</text>
</comment>
<comment type="mass spectrometry" mass="1369.62" method="MALDI" evidence="3">
    <molecule>Corazonin</molecule>
</comment>
<comment type="similarity">
    <text evidence="5">Belongs to the corazonin family.</text>
</comment>
<name>CORZ_CAMFO</name>
<sequence length="101" mass="11587">MLVLFVLSLVVSCALCQTFQYSRGWTNGKRSNFPAEISALGYDRFTNGELKRLKMLIYGSADEQPLLIHCDFVDKLKKFAHTDNAEPDQLRREKAPNNDNY</sequence>
<accession>E2ARW3</accession>
<feature type="signal peptide" evidence="2">
    <location>
        <begin position="1"/>
        <end position="16"/>
    </location>
</feature>
<feature type="chain" id="PRO_0000434203" description="Pro-corazonin" evidence="2">
    <location>
        <begin position="17"/>
        <end position="101"/>
    </location>
</feature>
<feature type="peptide" id="PRO_0000434204" description="Corazonin" evidence="3">
    <location>
        <begin position="17"/>
        <end position="27"/>
    </location>
</feature>
<feature type="propeptide" id="PRO_0000434205" evidence="6">
    <location>
        <begin position="31"/>
        <end position="101"/>
    </location>
</feature>
<feature type="modified residue" description="Asparagine amide" evidence="3">
    <location>
        <position position="27"/>
    </location>
</feature>
<evidence type="ECO:0000250" key="1">
    <source>
        <dbReference type="UniProtKB" id="P11496"/>
    </source>
</evidence>
<evidence type="ECO:0000255" key="2"/>
<evidence type="ECO:0000269" key="3">
    <source>
    </source>
</evidence>
<evidence type="ECO:0000303" key="4">
    <source>
    </source>
</evidence>
<evidence type="ECO:0000305" key="5"/>
<evidence type="ECO:0000305" key="6">
    <source>
    </source>
</evidence>
<evidence type="ECO:0000312" key="7">
    <source>
        <dbReference type="EMBL" id="EFN63812.1"/>
    </source>
</evidence>